<reference key="1">
    <citation type="journal article" date="2005" name="J. Biol. Chem.">
        <title>An FMN hydrolase is fused to a riboflavin kinase homolog in plants.</title>
        <authorList>
            <person name="Sandoval F.J."/>
            <person name="Roje S."/>
        </authorList>
    </citation>
    <scope>NUCLEOTIDE SEQUENCE [MRNA]</scope>
    <scope>FUNCTION</scope>
    <scope>CATALYTIC ACTIVITY</scope>
    <scope>COFACTOR</scope>
    <scope>BIOPHYSICOCHEMICAL PROPERTIES</scope>
    <scope>SUBUNIT</scope>
</reference>
<reference key="2">
    <citation type="journal article" date="1999" name="Nature">
        <title>Sequence and analysis of chromosome 4 of the plant Arabidopsis thaliana.</title>
        <authorList>
            <person name="Mayer K.F.X."/>
            <person name="Schueller C."/>
            <person name="Wambutt R."/>
            <person name="Murphy G."/>
            <person name="Volckaert G."/>
            <person name="Pohl T."/>
            <person name="Duesterhoeft A."/>
            <person name="Stiekema W."/>
            <person name="Entian K.-D."/>
            <person name="Terryn N."/>
            <person name="Harris B."/>
            <person name="Ansorge W."/>
            <person name="Brandt P."/>
            <person name="Grivell L.A."/>
            <person name="Rieger M."/>
            <person name="Weichselgartner M."/>
            <person name="de Simone V."/>
            <person name="Obermaier B."/>
            <person name="Mache R."/>
            <person name="Mueller M."/>
            <person name="Kreis M."/>
            <person name="Delseny M."/>
            <person name="Puigdomenech P."/>
            <person name="Watson M."/>
            <person name="Schmidtheini T."/>
            <person name="Reichert B."/>
            <person name="Portetelle D."/>
            <person name="Perez-Alonso M."/>
            <person name="Boutry M."/>
            <person name="Bancroft I."/>
            <person name="Vos P."/>
            <person name="Hoheisel J."/>
            <person name="Zimmermann W."/>
            <person name="Wedler H."/>
            <person name="Ridley P."/>
            <person name="Langham S.-A."/>
            <person name="McCullagh B."/>
            <person name="Bilham L."/>
            <person name="Robben J."/>
            <person name="van der Schueren J."/>
            <person name="Grymonprez B."/>
            <person name="Chuang Y.-J."/>
            <person name="Vandenbussche F."/>
            <person name="Braeken M."/>
            <person name="Weltjens I."/>
            <person name="Voet M."/>
            <person name="Bastiaens I."/>
            <person name="Aert R."/>
            <person name="Defoor E."/>
            <person name="Weitzenegger T."/>
            <person name="Bothe G."/>
            <person name="Ramsperger U."/>
            <person name="Hilbert H."/>
            <person name="Braun M."/>
            <person name="Holzer E."/>
            <person name="Brandt A."/>
            <person name="Peters S."/>
            <person name="van Staveren M."/>
            <person name="Dirkse W."/>
            <person name="Mooijman P."/>
            <person name="Klein Lankhorst R."/>
            <person name="Rose M."/>
            <person name="Hauf J."/>
            <person name="Koetter P."/>
            <person name="Berneiser S."/>
            <person name="Hempel S."/>
            <person name="Feldpausch M."/>
            <person name="Lamberth S."/>
            <person name="Van den Daele H."/>
            <person name="De Keyser A."/>
            <person name="Buysshaert C."/>
            <person name="Gielen J."/>
            <person name="Villarroel R."/>
            <person name="De Clercq R."/>
            <person name="van Montagu M."/>
            <person name="Rogers J."/>
            <person name="Cronin A."/>
            <person name="Quail M.A."/>
            <person name="Bray-Allen S."/>
            <person name="Clark L."/>
            <person name="Doggett J."/>
            <person name="Hall S."/>
            <person name="Kay M."/>
            <person name="Lennard N."/>
            <person name="McLay K."/>
            <person name="Mayes R."/>
            <person name="Pettett A."/>
            <person name="Rajandream M.A."/>
            <person name="Lyne M."/>
            <person name="Benes V."/>
            <person name="Rechmann S."/>
            <person name="Borkova D."/>
            <person name="Bloecker H."/>
            <person name="Scharfe M."/>
            <person name="Grimm M."/>
            <person name="Loehnert T.-H."/>
            <person name="Dose S."/>
            <person name="de Haan M."/>
            <person name="Maarse A.C."/>
            <person name="Schaefer M."/>
            <person name="Mueller-Auer S."/>
            <person name="Gabel C."/>
            <person name="Fuchs M."/>
            <person name="Fartmann B."/>
            <person name="Granderath K."/>
            <person name="Dauner D."/>
            <person name="Herzl A."/>
            <person name="Neumann S."/>
            <person name="Argiriou A."/>
            <person name="Vitale D."/>
            <person name="Liguori R."/>
            <person name="Piravandi E."/>
            <person name="Massenet O."/>
            <person name="Quigley F."/>
            <person name="Clabauld G."/>
            <person name="Muendlein A."/>
            <person name="Felber R."/>
            <person name="Schnabl S."/>
            <person name="Hiller R."/>
            <person name="Schmidt W."/>
            <person name="Lecharny A."/>
            <person name="Aubourg S."/>
            <person name="Chefdor F."/>
            <person name="Cooke R."/>
            <person name="Berger C."/>
            <person name="Monfort A."/>
            <person name="Casacuberta E."/>
            <person name="Gibbons T."/>
            <person name="Weber N."/>
            <person name="Vandenbol M."/>
            <person name="Bargues M."/>
            <person name="Terol J."/>
            <person name="Torres A."/>
            <person name="Perez-Perez A."/>
            <person name="Purnelle B."/>
            <person name="Bent E."/>
            <person name="Johnson S."/>
            <person name="Tacon D."/>
            <person name="Jesse T."/>
            <person name="Heijnen L."/>
            <person name="Schwarz S."/>
            <person name="Scholler P."/>
            <person name="Heber S."/>
            <person name="Francs P."/>
            <person name="Bielke C."/>
            <person name="Frishman D."/>
            <person name="Haase D."/>
            <person name="Lemcke K."/>
            <person name="Mewes H.-W."/>
            <person name="Stocker S."/>
            <person name="Zaccaria P."/>
            <person name="Bevan M."/>
            <person name="Wilson R.K."/>
            <person name="de la Bastide M."/>
            <person name="Habermann K."/>
            <person name="Parnell L."/>
            <person name="Dedhia N."/>
            <person name="Gnoj L."/>
            <person name="Schutz K."/>
            <person name="Huang E."/>
            <person name="Spiegel L."/>
            <person name="Sekhon M."/>
            <person name="Murray J."/>
            <person name="Sheet P."/>
            <person name="Cordes M."/>
            <person name="Abu-Threideh J."/>
            <person name="Stoneking T."/>
            <person name="Kalicki J."/>
            <person name="Graves T."/>
            <person name="Harmon G."/>
            <person name="Edwards J."/>
            <person name="Latreille P."/>
            <person name="Courtney L."/>
            <person name="Cloud J."/>
            <person name="Abbott A."/>
            <person name="Scott K."/>
            <person name="Johnson D."/>
            <person name="Minx P."/>
            <person name="Bentley D."/>
            <person name="Fulton B."/>
            <person name="Miller N."/>
            <person name="Greco T."/>
            <person name="Kemp K."/>
            <person name="Kramer J."/>
            <person name="Fulton L."/>
            <person name="Mardis E."/>
            <person name="Dante M."/>
            <person name="Pepin K."/>
            <person name="Hillier L.W."/>
            <person name="Nelson J."/>
            <person name="Spieth J."/>
            <person name="Ryan E."/>
            <person name="Andrews S."/>
            <person name="Geisel C."/>
            <person name="Layman D."/>
            <person name="Du H."/>
            <person name="Ali J."/>
            <person name="Berghoff A."/>
            <person name="Jones K."/>
            <person name="Drone K."/>
            <person name="Cotton M."/>
            <person name="Joshu C."/>
            <person name="Antonoiu B."/>
            <person name="Zidanic M."/>
            <person name="Strong C."/>
            <person name="Sun H."/>
            <person name="Lamar B."/>
            <person name="Yordan C."/>
            <person name="Ma P."/>
            <person name="Zhong J."/>
            <person name="Preston R."/>
            <person name="Vil D."/>
            <person name="Shekher M."/>
            <person name="Matero A."/>
            <person name="Shah R."/>
            <person name="Swaby I.K."/>
            <person name="O'Shaughnessy A."/>
            <person name="Rodriguez M."/>
            <person name="Hoffman J."/>
            <person name="Till S."/>
            <person name="Granat S."/>
            <person name="Shohdy N."/>
            <person name="Hasegawa A."/>
            <person name="Hameed A."/>
            <person name="Lodhi M."/>
            <person name="Johnson A."/>
            <person name="Chen E."/>
            <person name="Marra M.A."/>
            <person name="Martienssen R."/>
            <person name="McCombie W.R."/>
        </authorList>
    </citation>
    <scope>NUCLEOTIDE SEQUENCE [LARGE SCALE GENOMIC DNA]</scope>
    <source>
        <strain>cv. Columbia</strain>
    </source>
</reference>
<reference key="3">
    <citation type="journal article" date="2017" name="Plant J.">
        <title>Araport11: a complete reannotation of the Arabidopsis thaliana reference genome.</title>
        <authorList>
            <person name="Cheng C.Y."/>
            <person name="Krishnakumar V."/>
            <person name="Chan A.P."/>
            <person name="Thibaud-Nissen F."/>
            <person name="Schobel S."/>
            <person name="Town C.D."/>
        </authorList>
    </citation>
    <scope>GENOME REANNOTATION</scope>
    <source>
        <strain>cv. Columbia</strain>
    </source>
</reference>
<reference key="4">
    <citation type="journal article" date="2003" name="Science">
        <title>Empirical analysis of transcriptional activity in the Arabidopsis genome.</title>
        <authorList>
            <person name="Yamada K."/>
            <person name="Lim J."/>
            <person name="Dale J.M."/>
            <person name="Chen H."/>
            <person name="Shinn P."/>
            <person name="Palm C.J."/>
            <person name="Southwick A.M."/>
            <person name="Wu H.C."/>
            <person name="Kim C.J."/>
            <person name="Nguyen M."/>
            <person name="Pham P.K."/>
            <person name="Cheuk R.F."/>
            <person name="Karlin-Newmann G."/>
            <person name="Liu S.X."/>
            <person name="Lam B."/>
            <person name="Sakano H."/>
            <person name="Wu T."/>
            <person name="Yu G."/>
            <person name="Miranda M."/>
            <person name="Quach H.L."/>
            <person name="Tripp M."/>
            <person name="Chang C.H."/>
            <person name="Lee J.M."/>
            <person name="Toriumi M.J."/>
            <person name="Chan M.M."/>
            <person name="Tang C.C."/>
            <person name="Onodera C.S."/>
            <person name="Deng J.M."/>
            <person name="Akiyama K."/>
            <person name="Ansari Y."/>
            <person name="Arakawa T."/>
            <person name="Banh J."/>
            <person name="Banno F."/>
            <person name="Bowser L."/>
            <person name="Brooks S.Y."/>
            <person name="Carninci P."/>
            <person name="Chao Q."/>
            <person name="Choy N."/>
            <person name="Enju A."/>
            <person name="Goldsmith A.D."/>
            <person name="Gurjal M."/>
            <person name="Hansen N.F."/>
            <person name="Hayashizaki Y."/>
            <person name="Johnson-Hopson C."/>
            <person name="Hsuan V.W."/>
            <person name="Iida K."/>
            <person name="Karnes M."/>
            <person name="Khan S."/>
            <person name="Koesema E."/>
            <person name="Ishida J."/>
            <person name="Jiang P.X."/>
            <person name="Jones T."/>
            <person name="Kawai J."/>
            <person name="Kamiya A."/>
            <person name="Meyers C."/>
            <person name="Nakajima M."/>
            <person name="Narusaka M."/>
            <person name="Seki M."/>
            <person name="Sakurai T."/>
            <person name="Satou M."/>
            <person name="Tamse R."/>
            <person name="Vaysberg M."/>
            <person name="Wallender E.K."/>
            <person name="Wong C."/>
            <person name="Yamamura Y."/>
            <person name="Yuan S."/>
            <person name="Shinozaki K."/>
            <person name="Davis R.W."/>
            <person name="Theologis A."/>
            <person name="Ecker J.R."/>
        </authorList>
    </citation>
    <scope>NUCLEOTIDE SEQUENCE [LARGE SCALE MRNA]</scope>
    <source>
        <strain>cv. Columbia</strain>
    </source>
</reference>
<reference key="5">
    <citation type="submission" date="2006-07" db="EMBL/GenBank/DDBJ databases">
        <title>Large-scale analysis of RIKEN Arabidopsis full-length (RAFL) cDNAs.</title>
        <authorList>
            <person name="Totoki Y."/>
            <person name="Seki M."/>
            <person name="Ishida J."/>
            <person name="Nakajima M."/>
            <person name="Enju A."/>
            <person name="Kamiya A."/>
            <person name="Narusaka M."/>
            <person name="Shin-i T."/>
            <person name="Nakagawa M."/>
            <person name="Sakamoto N."/>
            <person name="Oishi K."/>
            <person name="Kohara Y."/>
            <person name="Kobayashi M."/>
            <person name="Toyoda A."/>
            <person name="Sakaki Y."/>
            <person name="Sakurai T."/>
            <person name="Iida K."/>
            <person name="Akiyama K."/>
            <person name="Satou M."/>
            <person name="Toyoda T."/>
            <person name="Konagaya A."/>
            <person name="Carninci P."/>
            <person name="Kawai J."/>
            <person name="Hayashizaki Y."/>
            <person name="Shinozaki K."/>
        </authorList>
    </citation>
    <scope>NUCLEOTIDE SEQUENCE [LARGE SCALE MRNA]</scope>
    <source>
        <strain>cv. Columbia</strain>
    </source>
</reference>
<reference key="6">
    <citation type="journal article" date="2011" name="J. Biol. Chem.">
        <title>An FMN hydrolase of the haloacid dehalogenase superfamily is active in plant chloroplasts.</title>
        <authorList>
            <person name="Rawat R."/>
            <person name="Sandoval F.J."/>
            <person name="Wei Z."/>
            <person name="Winkler R."/>
            <person name="Roje S."/>
        </authorList>
    </citation>
    <scope>BIOPHYSICOCHEMICAL PROPERTIES</scope>
    <scope>CATALYTIC ACTIVITY</scope>
</reference>
<reference key="7">
    <citation type="journal article" date="2012" name="Mol. Cell. Proteomics">
        <title>Comparative large-scale characterisation of plant vs. mammal proteins reveals similar and idiosyncratic N-alpha acetylation features.</title>
        <authorList>
            <person name="Bienvenut W.V."/>
            <person name="Sumpton D."/>
            <person name="Martinez A."/>
            <person name="Lilla S."/>
            <person name="Espagne C."/>
            <person name="Meinnel T."/>
            <person name="Giglione C."/>
        </authorList>
    </citation>
    <scope>ACETYLATION [LARGE SCALE ANALYSIS] AT SER-2</scope>
    <scope>CLEAVAGE OF INITIATOR METHIONINE [LARGE SCALE ANALYSIS]</scope>
    <scope>IDENTIFICATION BY MASS SPECTROMETRY [LARGE SCALE ANALYSIS]</scope>
</reference>
<dbReference type="EC" id="3.1.3.102" evidence="2 3"/>
<dbReference type="EC" id="2.7.1.26" evidence="2 3"/>
<dbReference type="EMBL" id="AY878327">
    <property type="protein sequence ID" value="AAX98488.1"/>
    <property type="molecule type" value="mRNA"/>
</dbReference>
<dbReference type="EMBL" id="AL022603">
    <property type="protein sequence ID" value="CAA18711.1"/>
    <property type="status" value="ALT_SEQ"/>
    <property type="molecule type" value="Genomic_DNA"/>
</dbReference>
<dbReference type="EMBL" id="AL161555">
    <property type="protein sequence ID" value="CAB81254.1"/>
    <property type="status" value="ALT_SEQ"/>
    <property type="molecule type" value="Genomic_DNA"/>
</dbReference>
<dbReference type="EMBL" id="CP002687">
    <property type="protein sequence ID" value="AEE84457.1"/>
    <property type="molecule type" value="Genomic_DNA"/>
</dbReference>
<dbReference type="EMBL" id="BT006373">
    <property type="protein sequence ID" value="AAP21181.1"/>
    <property type="molecule type" value="mRNA"/>
</dbReference>
<dbReference type="EMBL" id="AK227237">
    <property type="protein sequence ID" value="BAE99274.1"/>
    <property type="molecule type" value="mRNA"/>
</dbReference>
<dbReference type="PIR" id="T05155">
    <property type="entry name" value="T05155"/>
</dbReference>
<dbReference type="RefSeq" id="NP_193878.2">
    <property type="nucleotide sequence ID" value="NM_118267.5"/>
</dbReference>
<dbReference type="SMR" id="Q84MD8"/>
<dbReference type="BioGRID" id="13521">
    <property type="interactions" value="1"/>
</dbReference>
<dbReference type="FunCoup" id="Q84MD8">
    <property type="interactions" value="303"/>
</dbReference>
<dbReference type="IntAct" id="Q84MD8">
    <property type="interactions" value="1"/>
</dbReference>
<dbReference type="STRING" id="3702.Q84MD8"/>
<dbReference type="iPTMnet" id="Q84MD8"/>
<dbReference type="PaxDb" id="3702-AT4G21470.1"/>
<dbReference type="ProteomicsDB" id="228921"/>
<dbReference type="EnsemblPlants" id="AT4G21470.1">
    <property type="protein sequence ID" value="AT4G21470.1"/>
    <property type="gene ID" value="AT4G21470"/>
</dbReference>
<dbReference type="GeneID" id="828232"/>
<dbReference type="Gramene" id="AT4G21470.1">
    <property type="protein sequence ID" value="AT4G21470.1"/>
    <property type="gene ID" value="AT4G21470"/>
</dbReference>
<dbReference type="KEGG" id="ath:AT4G21470"/>
<dbReference type="Araport" id="AT4G21470"/>
<dbReference type="TAIR" id="AT4G21470">
    <property type="gene designation" value="FMN/FHY"/>
</dbReference>
<dbReference type="eggNOG" id="KOG2914">
    <property type="taxonomic scope" value="Eukaryota"/>
</dbReference>
<dbReference type="eggNOG" id="KOG3110">
    <property type="taxonomic scope" value="Eukaryota"/>
</dbReference>
<dbReference type="HOGENOM" id="CLU_048437_3_1_1"/>
<dbReference type="InParanoid" id="Q84MD8"/>
<dbReference type="OMA" id="QWDGRES"/>
<dbReference type="OrthoDB" id="276388at2759"/>
<dbReference type="PhylomeDB" id="Q84MD8"/>
<dbReference type="BioCyc" id="ARA:AT4G21470-MONOMER"/>
<dbReference type="BioCyc" id="MetaCyc:AT4G21470-MONOMER"/>
<dbReference type="BRENDA" id="3.1.3.102">
    <property type="organism ID" value="399"/>
</dbReference>
<dbReference type="SABIO-RK" id="Q84MD8"/>
<dbReference type="UniPathway" id="UPA00276">
    <property type="reaction ID" value="UER00406"/>
</dbReference>
<dbReference type="PRO" id="PR:Q84MD8"/>
<dbReference type="Proteomes" id="UP000006548">
    <property type="component" value="Chromosome 4"/>
</dbReference>
<dbReference type="ExpressionAtlas" id="Q84MD8">
    <property type="expression patterns" value="baseline and differential"/>
</dbReference>
<dbReference type="GO" id="GO:0005524">
    <property type="term" value="F:ATP binding"/>
    <property type="evidence" value="ECO:0007669"/>
    <property type="project" value="UniProtKB-KW"/>
</dbReference>
<dbReference type="GO" id="GO:0003919">
    <property type="term" value="F:FMN adenylyltransferase activity"/>
    <property type="evidence" value="ECO:0000314"/>
    <property type="project" value="TAIR"/>
</dbReference>
<dbReference type="GO" id="GO:0090711">
    <property type="term" value="F:FMN hydrolase activity"/>
    <property type="evidence" value="ECO:0007669"/>
    <property type="project" value="UniProtKB-EC"/>
</dbReference>
<dbReference type="GO" id="GO:0000287">
    <property type="term" value="F:magnesium ion binding"/>
    <property type="evidence" value="ECO:0000314"/>
    <property type="project" value="UniProtKB"/>
</dbReference>
<dbReference type="GO" id="GO:0008531">
    <property type="term" value="F:riboflavin kinase activity"/>
    <property type="evidence" value="ECO:0000314"/>
    <property type="project" value="TAIR"/>
</dbReference>
<dbReference type="GO" id="GO:0009398">
    <property type="term" value="P:FMN biosynthetic process"/>
    <property type="evidence" value="ECO:0007669"/>
    <property type="project" value="UniProtKB-UniPathway"/>
</dbReference>
<dbReference type="GO" id="GO:0009231">
    <property type="term" value="P:riboflavin biosynthetic process"/>
    <property type="evidence" value="ECO:0007669"/>
    <property type="project" value="InterPro"/>
</dbReference>
<dbReference type="FunFam" id="3.40.50.1000:FF:000119">
    <property type="entry name" value="Bifunctional riboflavin kinase/FMN phosphatase"/>
    <property type="match status" value="1"/>
</dbReference>
<dbReference type="FunFam" id="1.10.150.240:FF:000001">
    <property type="entry name" value="Haloacid dehalogenase-like hydrolase domain"/>
    <property type="match status" value="1"/>
</dbReference>
<dbReference type="FunFam" id="2.40.30.30:FF:000005">
    <property type="entry name" value="Haloacid dehalogenase-like hydrolase domain-containing protein 1A"/>
    <property type="match status" value="1"/>
</dbReference>
<dbReference type="Gene3D" id="3.40.50.1000">
    <property type="entry name" value="HAD superfamily/HAD-like"/>
    <property type="match status" value="1"/>
</dbReference>
<dbReference type="Gene3D" id="1.10.150.240">
    <property type="entry name" value="Putative phosphatase, domain 2"/>
    <property type="match status" value="1"/>
</dbReference>
<dbReference type="Gene3D" id="2.40.30.30">
    <property type="entry name" value="Riboflavin kinase-like"/>
    <property type="match status" value="1"/>
</dbReference>
<dbReference type="InterPro" id="IPR036412">
    <property type="entry name" value="HAD-like_sf"/>
</dbReference>
<dbReference type="InterPro" id="IPR006439">
    <property type="entry name" value="HAD-SF_hydro_IA"/>
</dbReference>
<dbReference type="InterPro" id="IPR041492">
    <property type="entry name" value="HAD_2"/>
</dbReference>
<dbReference type="InterPro" id="IPR023214">
    <property type="entry name" value="HAD_sf"/>
</dbReference>
<dbReference type="InterPro" id="IPR023198">
    <property type="entry name" value="PGP-like_dom2"/>
</dbReference>
<dbReference type="InterPro" id="IPR023468">
    <property type="entry name" value="Riboflavin_kinase"/>
</dbReference>
<dbReference type="InterPro" id="IPR015865">
    <property type="entry name" value="Riboflavin_kinase_bac/euk"/>
</dbReference>
<dbReference type="InterPro" id="IPR023465">
    <property type="entry name" value="Riboflavin_kinase_dom_sf"/>
</dbReference>
<dbReference type="NCBIfam" id="TIGR01549">
    <property type="entry name" value="HAD-SF-IA-v1"/>
    <property type="match status" value="1"/>
</dbReference>
<dbReference type="NCBIfam" id="TIGR01509">
    <property type="entry name" value="HAD-SF-IA-v3"/>
    <property type="match status" value="1"/>
</dbReference>
<dbReference type="PANTHER" id="PTHR22749:SF6">
    <property type="entry name" value="RIBOFLAVIN KINASE"/>
    <property type="match status" value="1"/>
</dbReference>
<dbReference type="PANTHER" id="PTHR22749">
    <property type="entry name" value="RIBOFLAVIN KINASE/FMN ADENYLYLTRANSFERASE"/>
    <property type="match status" value="1"/>
</dbReference>
<dbReference type="Pfam" id="PF01687">
    <property type="entry name" value="Flavokinase"/>
    <property type="match status" value="1"/>
</dbReference>
<dbReference type="Pfam" id="PF13419">
    <property type="entry name" value="HAD_2"/>
    <property type="match status" value="1"/>
</dbReference>
<dbReference type="PRINTS" id="PR00413">
    <property type="entry name" value="HADHALOGNASE"/>
</dbReference>
<dbReference type="SFLD" id="SFLDG01129">
    <property type="entry name" value="C1.5:_HAD__Beta-PGM__Phosphata"/>
    <property type="match status" value="1"/>
</dbReference>
<dbReference type="SFLD" id="SFLDS00003">
    <property type="entry name" value="Haloacid_Dehalogenase"/>
    <property type="match status" value="1"/>
</dbReference>
<dbReference type="SMART" id="SM00904">
    <property type="entry name" value="Flavokinase"/>
    <property type="match status" value="1"/>
</dbReference>
<dbReference type="SUPFAM" id="SSF56784">
    <property type="entry name" value="HAD-like"/>
    <property type="match status" value="1"/>
</dbReference>
<dbReference type="SUPFAM" id="SSF82114">
    <property type="entry name" value="Riboflavin kinase-like"/>
    <property type="match status" value="1"/>
</dbReference>
<comment type="function">
    <text evidence="2">Bifunctional enzyme that catalyzes the hydrolysis of flavin-mononucleotide (FMN) to riboflavin (vitamin B2) and the phosphorylation of riboflavin to form (FMN) coenzyme.</text>
</comment>
<comment type="catalytic activity">
    <reaction evidence="2 3">
        <text>riboflavin + ATP = FMN + ADP + H(+)</text>
        <dbReference type="Rhea" id="RHEA:14357"/>
        <dbReference type="ChEBI" id="CHEBI:15378"/>
        <dbReference type="ChEBI" id="CHEBI:30616"/>
        <dbReference type="ChEBI" id="CHEBI:57986"/>
        <dbReference type="ChEBI" id="CHEBI:58210"/>
        <dbReference type="ChEBI" id="CHEBI:456216"/>
        <dbReference type="EC" id="2.7.1.26"/>
    </reaction>
</comment>
<comment type="catalytic activity">
    <reaction evidence="2 3">
        <text>FMN + H2O = riboflavin + phosphate</text>
        <dbReference type="Rhea" id="RHEA:35587"/>
        <dbReference type="ChEBI" id="CHEBI:15377"/>
        <dbReference type="ChEBI" id="CHEBI:43474"/>
        <dbReference type="ChEBI" id="CHEBI:57986"/>
        <dbReference type="ChEBI" id="CHEBI:58210"/>
        <dbReference type="EC" id="3.1.3.102"/>
    </reaction>
</comment>
<comment type="cofactor">
    <cofactor evidence="2">
        <name>Mg(2+)</name>
        <dbReference type="ChEBI" id="CHEBI:18420"/>
    </cofactor>
</comment>
<comment type="biophysicochemical properties">
    <kinetics>
        <KM evidence="2">1.03 uM for riboflavin (at pH 7.5)</KM>
        <KM evidence="2">2 uM for ATP (at pH 7.5)</KM>
        <KM evidence="2">6.74 uM for FMN (at pH 7.5)</KM>
    </kinetics>
    <phDependence>
        <text evidence="2 7">Optimum pH is acidic (5.5-6.0) for FMN phosphatase activity and basic for riboflavin kinase activity.</text>
    </phDependence>
    <temperatureDependence>
        <text evidence="7">Optimum temperature is 55 degrees Celsius.</text>
    </temperatureDependence>
</comment>
<comment type="pathway">
    <text>Cofactor biosynthesis; FMN biosynthesis; FMN from riboflavin (ATP route): step 1/1.</text>
</comment>
<comment type="subunit">
    <text evidence="6">Monomer.</text>
</comment>
<comment type="similarity">
    <text evidence="5">In the N-terminal section; belongs to the HAD-like hydrolase superfamily. CbbY/CbbZ/Gph/YieH family.</text>
</comment>
<comment type="similarity">
    <text evidence="5">In the C-terminal section; belongs to the flavokinase family.</text>
</comment>
<comment type="sequence caution" evidence="5">
    <conflict type="erroneous gene model prediction">
        <sequence resource="EMBL-CDS" id="CAA18711"/>
    </conflict>
</comment>
<comment type="sequence caution" evidence="5">
    <conflict type="erroneous gene model prediction">
        <sequence resource="EMBL-CDS" id="CAB81254"/>
    </conflict>
</comment>
<feature type="initiator methionine" description="Removed" evidence="10">
    <location>
        <position position="1"/>
    </location>
</feature>
<feature type="chain" id="PRO_0000429025" description="Bifunctional riboflavin kinase/FMN phosphatase">
    <location>
        <begin position="2"/>
        <end position="379"/>
    </location>
</feature>
<feature type="active site" description="Nucleophile; for FMN phosphatase activity" evidence="1">
    <location>
        <position position="17"/>
    </location>
</feature>
<feature type="active site" description="Proton donor; for FMN phosphatase activity" evidence="1">
    <location>
        <position position="19"/>
    </location>
</feature>
<feature type="active site" description="Nucleophile; for riboflavin kinase activity" evidence="1">
    <location>
        <position position="312"/>
    </location>
</feature>
<feature type="binding site" evidence="1">
    <location>
        <position position="17"/>
    </location>
    <ligand>
        <name>Mg(2+)</name>
        <dbReference type="ChEBI" id="CHEBI:18420"/>
    </ligand>
</feature>
<feature type="binding site" evidence="1">
    <location>
        <position position="19"/>
    </location>
    <ligand>
        <name>Mg(2+)</name>
        <dbReference type="ChEBI" id="CHEBI:18420"/>
    </ligand>
</feature>
<feature type="binding site" evidence="1">
    <location>
        <position position="248"/>
    </location>
    <ligand>
        <name>ATP</name>
        <dbReference type="ChEBI" id="CHEBI:30616"/>
    </ligand>
</feature>
<feature type="binding site" evidence="1">
    <location>
        <position position="254"/>
    </location>
    <ligand>
        <name>ATP</name>
        <dbReference type="ChEBI" id="CHEBI:30616"/>
    </ligand>
</feature>
<feature type="binding site" evidence="1">
    <location>
        <position position="260"/>
    </location>
    <ligand>
        <name>ATP</name>
        <dbReference type="ChEBI" id="CHEBI:30616"/>
    </ligand>
</feature>
<feature type="binding site" evidence="1">
    <location>
        <position position="260"/>
    </location>
    <ligand>
        <name>Mg(2+)</name>
        <dbReference type="ChEBI" id="CHEBI:18420"/>
    </ligand>
</feature>
<feature type="binding site" evidence="1">
    <location>
        <position position="262"/>
    </location>
    <ligand>
        <name>ATP</name>
        <dbReference type="ChEBI" id="CHEBI:30616"/>
    </ligand>
</feature>
<feature type="binding site">
    <location>
        <position position="315"/>
    </location>
    <ligand>
        <name>ATP</name>
        <dbReference type="ChEBI" id="CHEBI:30616"/>
    </ligand>
</feature>
<feature type="binding site" evidence="1">
    <location>
        <position position="317"/>
    </location>
    <ligand>
        <name>ATP</name>
        <dbReference type="ChEBI" id="CHEBI:30616"/>
    </ligand>
</feature>
<feature type="binding site" evidence="1">
    <location>
        <position position="324"/>
    </location>
    <ligand>
        <name>ATP</name>
        <dbReference type="ChEBI" id="CHEBI:30616"/>
    </ligand>
</feature>
<feature type="binding site" evidence="1">
    <location>
        <position position="337"/>
    </location>
    <ligand>
        <name>FMN</name>
        <dbReference type="ChEBI" id="CHEBI:58210"/>
    </ligand>
</feature>
<feature type="binding site" evidence="1">
    <location>
        <position position="342"/>
    </location>
    <ligand>
        <name>FMN</name>
        <dbReference type="ChEBI" id="CHEBI:58210"/>
    </ligand>
</feature>
<feature type="modified residue" description="N-acetylserine" evidence="10">
    <location>
        <position position="2"/>
    </location>
</feature>
<name>FHYRK_ARATH</name>
<keyword id="KW-0007">Acetylation</keyword>
<keyword id="KW-0067">ATP-binding</keyword>
<keyword id="KW-0285">Flavoprotein</keyword>
<keyword id="KW-0288">FMN</keyword>
<keyword id="KW-0378">Hydrolase</keyword>
<keyword id="KW-0418">Kinase</keyword>
<keyword id="KW-0460">Magnesium</keyword>
<keyword id="KW-0479">Metal-binding</keyword>
<keyword id="KW-0511">Multifunctional enzyme</keyword>
<keyword id="KW-0547">Nucleotide-binding</keyword>
<keyword id="KW-1185">Reference proteome</keyword>
<keyword id="KW-0808">Transferase</keyword>
<organism>
    <name type="scientific">Arabidopsis thaliana</name>
    <name type="common">Mouse-ear cress</name>
    <dbReference type="NCBI Taxonomy" id="3702"/>
    <lineage>
        <taxon>Eukaryota</taxon>
        <taxon>Viridiplantae</taxon>
        <taxon>Streptophyta</taxon>
        <taxon>Embryophyta</taxon>
        <taxon>Tracheophyta</taxon>
        <taxon>Spermatophyta</taxon>
        <taxon>Magnoliopsida</taxon>
        <taxon>eudicotyledons</taxon>
        <taxon>Gunneridae</taxon>
        <taxon>Pentapetalae</taxon>
        <taxon>rosids</taxon>
        <taxon>malvids</taxon>
        <taxon>Brassicales</taxon>
        <taxon>Brassicaceae</taxon>
        <taxon>Camelineae</taxon>
        <taxon>Arabidopsis</taxon>
    </lineage>
</organism>
<evidence type="ECO:0000250" key="1"/>
<evidence type="ECO:0000269" key="2">
    <source>
    </source>
</evidence>
<evidence type="ECO:0000269" key="3">
    <source>
    </source>
</evidence>
<evidence type="ECO:0000303" key="4">
    <source>
    </source>
</evidence>
<evidence type="ECO:0000305" key="5"/>
<evidence type="ECO:0000305" key="6">
    <source>
    </source>
</evidence>
<evidence type="ECO:0000305" key="7">
    <source>
    </source>
</evidence>
<evidence type="ECO:0000312" key="8">
    <source>
        <dbReference type="Araport" id="AT4G21470"/>
    </source>
</evidence>
<evidence type="ECO:0000312" key="9">
    <source>
        <dbReference type="EMBL" id="CAA18711.1"/>
    </source>
</evidence>
<evidence type="ECO:0007744" key="10">
    <source>
    </source>
</evidence>
<gene>
    <name evidence="4" type="primary">FHY</name>
    <name evidence="4" type="synonym">FMN</name>
    <name evidence="8" type="ordered locus">At4g21470</name>
    <name evidence="9" type="ORF">F18E5.90</name>
</gene>
<protein>
    <recommendedName>
        <fullName>Bifunctional riboflavin kinase/FMN phosphatase</fullName>
    </recommendedName>
    <domain>
        <recommendedName>
            <fullName evidence="4">FMN phosphatase</fullName>
            <ecNumber evidence="2 3">3.1.3.102</ecNumber>
        </recommendedName>
        <alternativeName>
            <fullName evidence="4">FMN phosphohydrolase</fullName>
        </alternativeName>
    </domain>
    <domain>
        <recommendedName>
            <fullName evidence="4">Riboflavin kinase</fullName>
            <ecNumber evidence="2 3">2.7.1.26</ecNumber>
        </recommendedName>
        <alternativeName>
            <fullName evidence="4">Flavokinase</fullName>
        </alternativeName>
    </domain>
</protein>
<proteinExistence type="evidence at protein level"/>
<sequence length="379" mass="42110">MSMSNSLKKLSSCVLIDLDGTLINTDGVVGDILRKYLCKYGKQWDGRESLKIVGKTPVEAATTIVEDYELPCKVDEFNSEFYPLFSAQMDKIKSLPGANRLIRHLKCHGVPVALASNSSRANIESKISYHEGWKECFSVIVGSDEVSKGKPSPDIFLEAAKRLKKDPADCLVIEDSVPGVMAGKAAGTKVIAVPSLPKQTHLYTSADEVINSLLDIRLEKWGLPPFQDWIENTLPIDPWHIGGPVIKGFGRGSKVLGIPTANLSTKDYADELVEHPSGVYFGWAGLAKRGVFKMVMSIGWNPYFNNKEKTIEPWLLHDFTEDFYGEELRLIIVGYIRPEANFSSLESLIAKIHEDREVAEKALDLPSYAKFKGDPYLTK</sequence>
<accession>Q84MD8</accession>
<accession>O65412</accession>